<gene>
    <name evidence="1" type="primary">acpS</name>
    <name type="ordered locus">lhv_0284</name>
</gene>
<dbReference type="EC" id="2.7.8.7" evidence="1"/>
<dbReference type="EMBL" id="CP000517">
    <property type="protein sequence ID" value="ABX26513.1"/>
    <property type="molecule type" value="Genomic_DNA"/>
</dbReference>
<dbReference type="RefSeq" id="WP_003625735.1">
    <property type="nucleotide sequence ID" value="NC_010080.1"/>
</dbReference>
<dbReference type="SMR" id="A8YXI2"/>
<dbReference type="KEGG" id="lhe:lhv_0284"/>
<dbReference type="eggNOG" id="COG0736">
    <property type="taxonomic scope" value="Bacteria"/>
</dbReference>
<dbReference type="HOGENOM" id="CLU_089696_1_2_9"/>
<dbReference type="Proteomes" id="UP000000790">
    <property type="component" value="Chromosome"/>
</dbReference>
<dbReference type="GO" id="GO:0005737">
    <property type="term" value="C:cytoplasm"/>
    <property type="evidence" value="ECO:0007669"/>
    <property type="project" value="UniProtKB-SubCell"/>
</dbReference>
<dbReference type="GO" id="GO:0008897">
    <property type="term" value="F:holo-[acyl-carrier-protein] synthase activity"/>
    <property type="evidence" value="ECO:0007669"/>
    <property type="project" value="UniProtKB-UniRule"/>
</dbReference>
<dbReference type="GO" id="GO:0000287">
    <property type="term" value="F:magnesium ion binding"/>
    <property type="evidence" value="ECO:0007669"/>
    <property type="project" value="UniProtKB-UniRule"/>
</dbReference>
<dbReference type="GO" id="GO:0006633">
    <property type="term" value="P:fatty acid biosynthetic process"/>
    <property type="evidence" value="ECO:0007669"/>
    <property type="project" value="UniProtKB-UniRule"/>
</dbReference>
<dbReference type="Gene3D" id="3.90.470.20">
    <property type="entry name" value="4'-phosphopantetheinyl transferase domain"/>
    <property type="match status" value="1"/>
</dbReference>
<dbReference type="HAMAP" id="MF_00101">
    <property type="entry name" value="AcpS"/>
    <property type="match status" value="1"/>
</dbReference>
<dbReference type="InterPro" id="IPR008278">
    <property type="entry name" value="4-PPantetheinyl_Trfase_dom"/>
</dbReference>
<dbReference type="InterPro" id="IPR037143">
    <property type="entry name" value="4-PPantetheinyl_Trfase_dom_sf"/>
</dbReference>
<dbReference type="InterPro" id="IPR002582">
    <property type="entry name" value="ACPS"/>
</dbReference>
<dbReference type="InterPro" id="IPR004568">
    <property type="entry name" value="Ppantetheine-prot_Trfase_dom"/>
</dbReference>
<dbReference type="NCBIfam" id="TIGR00516">
    <property type="entry name" value="acpS"/>
    <property type="match status" value="1"/>
</dbReference>
<dbReference type="NCBIfam" id="TIGR00556">
    <property type="entry name" value="pantethn_trn"/>
    <property type="match status" value="1"/>
</dbReference>
<dbReference type="Pfam" id="PF01648">
    <property type="entry name" value="ACPS"/>
    <property type="match status" value="1"/>
</dbReference>
<dbReference type="SUPFAM" id="SSF56214">
    <property type="entry name" value="4'-phosphopantetheinyl transferase"/>
    <property type="match status" value="1"/>
</dbReference>
<comment type="function">
    <text evidence="1">Transfers the 4'-phosphopantetheine moiety from coenzyme A to a Ser of acyl-carrier-protein.</text>
</comment>
<comment type="catalytic activity">
    <reaction evidence="1">
        <text>apo-[ACP] + CoA = holo-[ACP] + adenosine 3',5'-bisphosphate + H(+)</text>
        <dbReference type="Rhea" id="RHEA:12068"/>
        <dbReference type="Rhea" id="RHEA-COMP:9685"/>
        <dbReference type="Rhea" id="RHEA-COMP:9690"/>
        <dbReference type="ChEBI" id="CHEBI:15378"/>
        <dbReference type="ChEBI" id="CHEBI:29999"/>
        <dbReference type="ChEBI" id="CHEBI:57287"/>
        <dbReference type="ChEBI" id="CHEBI:58343"/>
        <dbReference type="ChEBI" id="CHEBI:64479"/>
        <dbReference type="EC" id="2.7.8.7"/>
    </reaction>
</comment>
<comment type="cofactor">
    <cofactor evidence="1">
        <name>Mg(2+)</name>
        <dbReference type="ChEBI" id="CHEBI:18420"/>
    </cofactor>
</comment>
<comment type="subcellular location">
    <subcellularLocation>
        <location evidence="1">Cytoplasm</location>
    </subcellularLocation>
</comment>
<comment type="similarity">
    <text evidence="1">Belongs to the P-Pant transferase superfamily. AcpS family.</text>
</comment>
<proteinExistence type="inferred from homology"/>
<organism>
    <name type="scientific">Lactobacillus helveticus (strain DPC 4571)</name>
    <dbReference type="NCBI Taxonomy" id="405566"/>
    <lineage>
        <taxon>Bacteria</taxon>
        <taxon>Bacillati</taxon>
        <taxon>Bacillota</taxon>
        <taxon>Bacilli</taxon>
        <taxon>Lactobacillales</taxon>
        <taxon>Lactobacillaceae</taxon>
        <taxon>Lactobacillus</taxon>
    </lineage>
</organism>
<accession>A8YXI2</accession>
<keyword id="KW-0963">Cytoplasm</keyword>
<keyword id="KW-0275">Fatty acid biosynthesis</keyword>
<keyword id="KW-0276">Fatty acid metabolism</keyword>
<keyword id="KW-0444">Lipid biosynthesis</keyword>
<keyword id="KW-0443">Lipid metabolism</keyword>
<keyword id="KW-0460">Magnesium</keyword>
<keyword id="KW-0479">Metal-binding</keyword>
<keyword id="KW-0808">Transferase</keyword>
<protein>
    <recommendedName>
        <fullName evidence="1">Holo-[acyl-carrier-protein] synthase</fullName>
        <shortName evidence="1">Holo-ACP synthase</shortName>
        <ecNumber evidence="1">2.7.8.7</ecNumber>
    </recommendedName>
    <alternativeName>
        <fullName evidence="1">4'-phosphopantetheinyl transferase AcpS</fullName>
    </alternativeName>
</protein>
<feature type="chain" id="PRO_1000071297" description="Holo-[acyl-carrier-protein] synthase">
    <location>
        <begin position="1"/>
        <end position="118"/>
    </location>
</feature>
<feature type="binding site" evidence="1">
    <location>
        <position position="8"/>
    </location>
    <ligand>
        <name>Mg(2+)</name>
        <dbReference type="ChEBI" id="CHEBI:18420"/>
    </ligand>
</feature>
<feature type="binding site" evidence="1">
    <location>
        <position position="58"/>
    </location>
    <ligand>
        <name>Mg(2+)</name>
        <dbReference type="ChEBI" id="CHEBI:18420"/>
    </ligand>
</feature>
<evidence type="ECO:0000255" key="1">
    <source>
        <dbReference type="HAMAP-Rule" id="MF_00101"/>
    </source>
</evidence>
<reference key="1">
    <citation type="journal article" date="2008" name="J. Bacteriol.">
        <title>Genome sequence of Lactobacillus helveticus: an organism distinguished by selective gene loss and IS element expansion.</title>
        <authorList>
            <person name="Callanan M."/>
            <person name="Kaleta P."/>
            <person name="O'Callaghan J."/>
            <person name="O'Sullivan O."/>
            <person name="Jordan K."/>
            <person name="McAuliffe O."/>
            <person name="Sangrador-Vegas A."/>
            <person name="Slattery L."/>
            <person name="Fitzgerald G.F."/>
            <person name="Beresford T."/>
            <person name="Ross R.P."/>
        </authorList>
    </citation>
    <scope>NUCLEOTIDE SEQUENCE [LARGE SCALE GENOMIC DNA]</scope>
    <source>
        <strain>DPC 4571</strain>
    </source>
</reference>
<name>ACPS_LACH4</name>
<sequence>MIKGVGIDSIEVERVKKIVAKGDSFAEKVLTPKEFAQYQKMKGKRKVEYLGGRFSLKESFSKAMGTGLGKYVGFQDVETLWDDLGHPVMTSTKFDGNIFPSITHDNHEIITFVVLEEK</sequence>